<keyword id="KW-0489">Methyltransferase</keyword>
<keyword id="KW-1185">Reference proteome</keyword>
<keyword id="KW-0949">S-adenosyl-L-methionine</keyword>
<keyword id="KW-0808">Transferase</keyword>
<protein>
    <recommendedName>
        <fullName evidence="5">Methyltransferase ausD</fullName>
        <ecNumber evidence="7">2.1.3.-</ecNumber>
    </recommendedName>
    <alternativeName>
        <fullName evidence="5">Austinoid biosynthesis cluster protein D</fullName>
    </alternativeName>
</protein>
<name>AUSD_ASPCI</name>
<gene>
    <name evidence="5" type="primary">ausD</name>
    <name type="ORF">ASPCAL14368</name>
</gene>
<dbReference type="EC" id="2.1.3.-" evidence="7"/>
<dbReference type="EMBL" id="CDMC01000024">
    <property type="protein sequence ID" value="CEL11265.1"/>
    <property type="molecule type" value="Genomic_DNA"/>
</dbReference>
<dbReference type="SMR" id="A0A0U5GFQ6"/>
<dbReference type="STRING" id="454130.A0A0U5GFQ6"/>
<dbReference type="OMA" id="KIRDEAW"/>
<dbReference type="OrthoDB" id="2094832at2759"/>
<dbReference type="UniPathway" id="UPA00213"/>
<dbReference type="Proteomes" id="UP000054771">
    <property type="component" value="Unassembled WGS sequence"/>
</dbReference>
<dbReference type="GO" id="GO:0008168">
    <property type="term" value="F:methyltransferase activity"/>
    <property type="evidence" value="ECO:0007669"/>
    <property type="project" value="UniProtKB-KW"/>
</dbReference>
<dbReference type="GO" id="GO:0032259">
    <property type="term" value="P:methylation"/>
    <property type="evidence" value="ECO:0007669"/>
    <property type="project" value="UniProtKB-KW"/>
</dbReference>
<dbReference type="GO" id="GO:0016114">
    <property type="term" value="P:terpenoid biosynthetic process"/>
    <property type="evidence" value="ECO:0007669"/>
    <property type="project" value="UniProtKB-UniPathway"/>
</dbReference>
<dbReference type="Gene3D" id="3.40.50.150">
    <property type="entry name" value="Vaccinia Virus protein VP39"/>
    <property type="match status" value="1"/>
</dbReference>
<dbReference type="InterPro" id="IPR051654">
    <property type="entry name" value="Meroterpenoid_MTases"/>
</dbReference>
<dbReference type="InterPro" id="IPR029063">
    <property type="entry name" value="SAM-dependent_MTases_sf"/>
</dbReference>
<dbReference type="PANTHER" id="PTHR35897">
    <property type="entry name" value="METHYLTRANSFERASE AUSD"/>
    <property type="match status" value="1"/>
</dbReference>
<dbReference type="PANTHER" id="PTHR35897:SF1">
    <property type="entry name" value="METHYLTRANSFERASE AUSD"/>
    <property type="match status" value="1"/>
</dbReference>
<dbReference type="SUPFAM" id="SSF53335">
    <property type="entry name" value="S-adenosyl-L-methionine-dependent methyltransferases"/>
    <property type="match status" value="1"/>
</dbReference>
<organism>
    <name type="scientific">Aspergillus calidoustus</name>
    <dbReference type="NCBI Taxonomy" id="454130"/>
    <lineage>
        <taxon>Eukaryota</taxon>
        <taxon>Fungi</taxon>
        <taxon>Dikarya</taxon>
        <taxon>Ascomycota</taxon>
        <taxon>Pezizomycotina</taxon>
        <taxon>Eurotiomycetes</taxon>
        <taxon>Eurotiomycetidae</taxon>
        <taxon>Eurotiales</taxon>
        <taxon>Aspergillaceae</taxon>
        <taxon>Aspergillus</taxon>
        <taxon>Aspergillus subgen. Nidulantes</taxon>
    </lineage>
</organism>
<accession>A0A0U5GFQ6</accession>
<feature type="chain" id="PRO_0000453850" description="Methyltransferase ausD">
    <location>
        <begin position="1"/>
        <end position="279"/>
    </location>
</feature>
<feature type="binding site" evidence="2">
    <location>
        <begin position="124"/>
        <end position="125"/>
    </location>
    <ligand>
        <name>S-adenosyl-L-methionine</name>
        <dbReference type="ChEBI" id="CHEBI:59789"/>
    </ligand>
</feature>
<feature type="binding site" evidence="2">
    <location>
        <begin position="152"/>
        <end position="153"/>
    </location>
    <ligand>
        <name>S-adenosyl-L-methionine</name>
        <dbReference type="ChEBI" id="CHEBI:59789"/>
    </ligand>
</feature>
<feature type="binding site" evidence="2">
    <location>
        <position position="244"/>
    </location>
    <ligand>
        <name>S-adenosyl-L-methionine</name>
        <dbReference type="ChEBI" id="CHEBI:59789"/>
    </ligand>
</feature>
<evidence type="ECO:0000250" key="1">
    <source>
        <dbReference type="UniProtKB" id="C8VE82"/>
    </source>
</evidence>
<evidence type="ECO:0000250" key="2">
    <source>
        <dbReference type="UniProtKB" id="Q3J7D1"/>
    </source>
</evidence>
<evidence type="ECO:0000269" key="3">
    <source>
    </source>
</evidence>
<evidence type="ECO:0000269" key="4">
    <source>
    </source>
</evidence>
<evidence type="ECO:0000303" key="5">
    <source>
    </source>
</evidence>
<evidence type="ECO:0000305" key="6"/>
<evidence type="ECO:0000305" key="7">
    <source>
    </source>
</evidence>
<evidence type="ECO:0000305" key="8">
    <source>
    </source>
</evidence>
<comment type="function">
    <text evidence="1 3 4">Methyltransferase; part of the gene cluster that mediates the biosynthesis of calidodehydroaustin, a fungal meroterpenoid (PubMed:28233494, PubMed:29076725). The first step of the pathway is the synthesis of 3,5-dimethylorsellinic acid by the polyketide synthase ausA (PubMed:28233494). 3,5-dimethylorsellinic acid is then prenylated by the polyprenyl transferase ausN (PubMed:28233494). Further epoxidation by the FAD-dependent monooxygenase ausM and cyclization by the probable terpene cyclase ausL lead to the formation of protoaustinoid A (By similarity). Protoaustinoid A is then oxidized to spiro-lactone preaustinoid A3 by the combined action of the FAD-binding monooxygenases ausB and ausC, and the dioxygenase ausE (By similarity). Acid-catalyzed keto-rearrangement and ring contraction of the tetraketide portion of preaustinoid A3 by ausJ lead to the formation of preaustinoid A4 (By similarity). The aldo-keto reductase ausK, with the help of ausH, is involved in the next step by transforming preaustinoid A4 into isoaustinone which is in turn hydroxylated by the P450 monooxygenase ausI to form austinolide (By similarity). The cytochrome P450 monooxygenase ausG modifies austinolide to austinol (By similarity). Austinol is further acetylated to austin by the O-acetyltransferase ausP, which spontaneously changes to dehydroaustin (PubMed:28233494). The cytochrome P450 monooxygenase ausR then converts dehydroaustin is into 7-dehydrodehydroaustin (PubMed:28233494). The hydroxylation catalyzed by ausR permits the O-acetyltransferase ausQ to add an additional acetyl group to the molecule, leading to the formation of acetoxydehydroaustin (PubMed:28233494). The short chain dehydrogenase ausT catalyzes the reduction of the double bond present between carbon atoms 1 and 2 to convert 7-dehydrodehydroaustin into 1,2-dihydro-7-hydroxydehydroaustin (PubMed:28233494). AusQ catalyzes not only an acetylation reaction but also the addition of the PKS ausV diketide product to 1,2-dihydro-7-hydroxydehydroaustin, forming precalidodehydroaustin (PubMed:28233494). Finally, the iron/alpha-ketoglutarate-dependent dioxygenase converts precalidodehydroaustin into calidodehydroaustin (PubMed:28233494).</text>
</comment>
<comment type="pathway">
    <text evidence="7">Secondary metabolite biosynthesis; terpenoid biosynthesis.</text>
</comment>
<comment type="subunit">
    <text evidence="2">Homodimer.</text>
</comment>
<comment type="miscellaneous">
    <text evidence="8">In A.calidoustus, the austinoid gene cluster lies on a contiguous DNA region, while clusters from E.nidulans and P.brasilianum are split in their respective genomes. Genetic rearrangements provoked variability among the clusters and E.nidulans produces the least number of austionoid derivatives with the end products austinol and dehydroaustinol, while P.brasilianum can produce until acetoxydehydroaustin, and A.calidoustus produces the highest number of identified derivatives.</text>
</comment>
<comment type="similarity">
    <text evidence="6">Belongs to the class I-like SAM-binding methyltransferase superfamily.</text>
</comment>
<reference key="1">
    <citation type="journal article" date="2016" name="Genome Announc.">
        <title>Draft genome sequences of fungus Aspergillus calidoustus.</title>
        <authorList>
            <person name="Horn F."/>
            <person name="Linde J."/>
            <person name="Mattern D.J."/>
            <person name="Walther G."/>
            <person name="Guthke R."/>
            <person name="Scherlach K."/>
            <person name="Martin K."/>
            <person name="Brakhage A.A."/>
            <person name="Petzke L."/>
            <person name="Valiante V."/>
        </authorList>
    </citation>
    <scope>NUCLEOTIDE SEQUENCE [LARGE SCALE GENOMIC DNA]</scope>
    <source>
        <strain>SF006504</strain>
    </source>
</reference>
<reference key="2">
    <citation type="journal article" date="2017" name="ACS Chem. Biol.">
        <title>Discovery of an Extended Austinoid Biosynthetic Pathway in Aspergillus calidoustus.</title>
        <authorList>
            <person name="Valiante V."/>
            <person name="Mattern D.J."/>
            <person name="Schueffler A."/>
            <person name="Horn F."/>
            <person name="Walther G."/>
            <person name="Scherlach K."/>
            <person name="Petzke L."/>
            <person name="Dickhaut J."/>
            <person name="Guthke R."/>
            <person name="Hertweck C."/>
            <person name="Nett M."/>
            <person name="Thines E."/>
            <person name="Brakhage A.A."/>
        </authorList>
    </citation>
    <scope>FUNCTION</scope>
    <scope>PATHWAY</scope>
</reference>
<reference key="3">
    <citation type="journal article" date="2017" name="ACS Chem. Biol.">
        <title>Rewiring of the austinoid biosynthetic pathway in filamentous fungi.</title>
        <authorList>
            <person name="Mattern D.J."/>
            <person name="Valiante V."/>
            <person name="Horn F."/>
            <person name="Petzke L."/>
            <person name="Brakhage A.A."/>
        </authorList>
    </citation>
    <scope>FUNCTION</scope>
</reference>
<sequence>MHPDAQLKAAVKNGFDPNILCQRRLTVVKEPVRTILEKQGTIPADKIVDHVNELRDRAFAVFPYACIGQFSFVELSIAESPYYREMLERVKKGDLLLDLGCAFGQELRQLMFDGAPPTNLYGSDLQQEFLNLGYELFLDQPIFPESQLIAADILDKKSALFVRLQGKLNIVYISLFLHVFDWDKQVTVLENVLDLLAATPGSLIVCRVIACRNQAVLNKTHERMPYYYHDLASWNKLWEEIRTRTSLRLAVDVWEQPDDLVKKHPLPGIYVLGSAIRRH</sequence>
<proteinExistence type="inferred from homology"/>